<evidence type="ECO:0000250" key="1"/>
<evidence type="ECO:0000255" key="2">
    <source>
        <dbReference type="PROSITE-ProRule" id="PRU00703"/>
    </source>
</evidence>
<evidence type="ECO:0000269" key="3">
    <source>
    </source>
</evidence>
<evidence type="ECO:0007829" key="4">
    <source>
        <dbReference type="PDB" id="3FV6"/>
    </source>
</evidence>
<reference key="1">
    <citation type="journal article" date="1997" name="Nature">
        <title>The complete genome sequence of the Gram-positive bacterium Bacillus subtilis.</title>
        <authorList>
            <person name="Kunst F."/>
            <person name="Ogasawara N."/>
            <person name="Moszer I."/>
            <person name="Albertini A.M."/>
            <person name="Alloni G."/>
            <person name="Azevedo V."/>
            <person name="Bertero M.G."/>
            <person name="Bessieres P."/>
            <person name="Bolotin A."/>
            <person name="Borchert S."/>
            <person name="Borriss R."/>
            <person name="Boursier L."/>
            <person name="Brans A."/>
            <person name="Braun M."/>
            <person name="Brignell S.C."/>
            <person name="Bron S."/>
            <person name="Brouillet S."/>
            <person name="Bruschi C.V."/>
            <person name="Caldwell B."/>
            <person name="Capuano V."/>
            <person name="Carter N.M."/>
            <person name="Choi S.-K."/>
            <person name="Codani J.-J."/>
            <person name="Connerton I.F."/>
            <person name="Cummings N.J."/>
            <person name="Daniel R.A."/>
            <person name="Denizot F."/>
            <person name="Devine K.M."/>
            <person name="Duesterhoeft A."/>
            <person name="Ehrlich S.D."/>
            <person name="Emmerson P.T."/>
            <person name="Entian K.-D."/>
            <person name="Errington J."/>
            <person name="Fabret C."/>
            <person name="Ferrari E."/>
            <person name="Foulger D."/>
            <person name="Fritz C."/>
            <person name="Fujita M."/>
            <person name="Fujita Y."/>
            <person name="Fuma S."/>
            <person name="Galizzi A."/>
            <person name="Galleron N."/>
            <person name="Ghim S.-Y."/>
            <person name="Glaser P."/>
            <person name="Goffeau A."/>
            <person name="Golightly E.J."/>
            <person name="Grandi G."/>
            <person name="Guiseppi G."/>
            <person name="Guy B.J."/>
            <person name="Haga K."/>
            <person name="Haiech J."/>
            <person name="Harwood C.R."/>
            <person name="Henaut A."/>
            <person name="Hilbert H."/>
            <person name="Holsappel S."/>
            <person name="Hosono S."/>
            <person name="Hullo M.-F."/>
            <person name="Itaya M."/>
            <person name="Jones L.-M."/>
            <person name="Joris B."/>
            <person name="Karamata D."/>
            <person name="Kasahara Y."/>
            <person name="Klaerr-Blanchard M."/>
            <person name="Klein C."/>
            <person name="Kobayashi Y."/>
            <person name="Koetter P."/>
            <person name="Koningstein G."/>
            <person name="Krogh S."/>
            <person name="Kumano M."/>
            <person name="Kurita K."/>
            <person name="Lapidus A."/>
            <person name="Lardinois S."/>
            <person name="Lauber J."/>
            <person name="Lazarevic V."/>
            <person name="Lee S.-M."/>
            <person name="Levine A."/>
            <person name="Liu H."/>
            <person name="Masuda S."/>
            <person name="Mauel C."/>
            <person name="Medigue C."/>
            <person name="Medina N."/>
            <person name="Mellado R.P."/>
            <person name="Mizuno M."/>
            <person name="Moestl D."/>
            <person name="Nakai S."/>
            <person name="Noback M."/>
            <person name="Noone D."/>
            <person name="O'Reilly M."/>
            <person name="Ogawa K."/>
            <person name="Ogiwara A."/>
            <person name="Oudega B."/>
            <person name="Park S.-H."/>
            <person name="Parro V."/>
            <person name="Pohl T.M."/>
            <person name="Portetelle D."/>
            <person name="Porwollik S."/>
            <person name="Prescott A.M."/>
            <person name="Presecan E."/>
            <person name="Pujic P."/>
            <person name="Purnelle B."/>
            <person name="Rapoport G."/>
            <person name="Rey M."/>
            <person name="Reynolds S."/>
            <person name="Rieger M."/>
            <person name="Rivolta C."/>
            <person name="Rocha E."/>
            <person name="Roche B."/>
            <person name="Rose M."/>
            <person name="Sadaie Y."/>
            <person name="Sato T."/>
            <person name="Scanlan E."/>
            <person name="Schleich S."/>
            <person name="Schroeter R."/>
            <person name="Scoffone F."/>
            <person name="Sekiguchi J."/>
            <person name="Sekowska A."/>
            <person name="Seror S.J."/>
            <person name="Serror P."/>
            <person name="Shin B.-S."/>
            <person name="Soldo B."/>
            <person name="Sorokin A."/>
            <person name="Tacconi E."/>
            <person name="Takagi T."/>
            <person name="Takahashi H."/>
            <person name="Takemaru K."/>
            <person name="Takeuchi M."/>
            <person name="Tamakoshi A."/>
            <person name="Tanaka T."/>
            <person name="Terpstra P."/>
            <person name="Tognoni A."/>
            <person name="Tosato V."/>
            <person name="Uchiyama S."/>
            <person name="Vandenbol M."/>
            <person name="Vannier F."/>
            <person name="Vassarotti A."/>
            <person name="Viari A."/>
            <person name="Wambutt R."/>
            <person name="Wedler E."/>
            <person name="Wedler H."/>
            <person name="Weitzenegger T."/>
            <person name="Winters P."/>
            <person name="Wipat A."/>
            <person name="Yamamoto H."/>
            <person name="Yamane K."/>
            <person name="Yasumoto K."/>
            <person name="Yata K."/>
            <person name="Yoshida K."/>
            <person name="Yoshikawa H.-F."/>
            <person name="Zumstein E."/>
            <person name="Yoshikawa H."/>
            <person name="Danchin A."/>
        </authorList>
    </citation>
    <scope>NUCLEOTIDE SEQUENCE [LARGE SCALE GENOMIC DNA]</scope>
    <source>
        <strain>168</strain>
    </source>
</reference>
<reference key="2">
    <citation type="journal article" date="2005" name="Mol. Microbiol.">
        <title>CcpN (YqzB), a novel regulator for CcpA-independent catabolite repression of Bacillus subtilis gluconeogenic genes.</title>
        <authorList>
            <person name="Servant P."/>
            <person name="Le Coq D."/>
            <person name="Aymerich S."/>
        </authorList>
    </citation>
    <scope>FUNCTION IN GLUCONEOGENESIS REGULATION</scope>
    <scope>INDUCTION</scope>
    <scope>DNA-BINDING</scope>
    <scope>DISRUPTION PHENOTYPE</scope>
</reference>
<feature type="chain" id="PRO_0000360044" description="Transcriptional repressor CcpN">
    <location>
        <begin position="1"/>
        <end position="212"/>
    </location>
</feature>
<feature type="domain" description="HTH deoR-type">
    <location>
        <begin position="6"/>
        <end position="70"/>
    </location>
</feature>
<feature type="domain" description="CBS 1" evidence="2">
    <location>
        <begin position="83"/>
        <end position="139"/>
    </location>
</feature>
<feature type="domain" description="CBS 2" evidence="2">
    <location>
        <begin position="148"/>
        <end position="211"/>
    </location>
</feature>
<feature type="DNA-binding region" description="H-T-H motif" evidence="1">
    <location>
        <begin position="23"/>
        <end position="42"/>
    </location>
</feature>
<feature type="helix" evidence="4">
    <location>
        <begin position="69"/>
        <end position="75"/>
    </location>
</feature>
<feature type="helix" evidence="4">
    <location>
        <begin position="80"/>
        <end position="82"/>
    </location>
</feature>
<feature type="strand" evidence="4">
    <location>
        <begin position="89"/>
        <end position="91"/>
    </location>
</feature>
<feature type="helix" evidence="4">
    <location>
        <begin position="96"/>
        <end position="106"/>
    </location>
</feature>
<feature type="strand" evidence="4">
    <location>
        <begin position="109"/>
        <end position="114"/>
    </location>
</feature>
<feature type="strand" evidence="4">
    <location>
        <begin position="120"/>
        <end position="125"/>
    </location>
</feature>
<feature type="helix" evidence="4">
    <location>
        <begin position="126"/>
        <end position="133"/>
    </location>
</feature>
<feature type="turn" evidence="4">
    <location>
        <begin position="139"/>
        <end position="141"/>
    </location>
</feature>
<feature type="helix" evidence="4">
    <location>
        <begin position="144"/>
        <end position="146"/>
    </location>
</feature>
<feature type="strand" evidence="4">
    <location>
        <begin position="148"/>
        <end position="150"/>
    </location>
</feature>
<feature type="helix" evidence="4">
    <location>
        <begin position="163"/>
        <end position="173"/>
    </location>
</feature>
<feature type="strand" evidence="4">
    <location>
        <begin position="176"/>
        <end position="183"/>
    </location>
</feature>
<feature type="strand" evidence="4">
    <location>
        <begin position="185"/>
        <end position="195"/>
    </location>
</feature>
<feature type="helix" evidence="4">
    <location>
        <begin position="196"/>
        <end position="207"/>
    </location>
</feature>
<accession>O34994</accession>
<protein>
    <recommendedName>
        <fullName>Transcriptional repressor CcpN</fullName>
    </recommendedName>
    <alternativeName>
        <fullName>Catabolite control protein N</fullName>
    </alternativeName>
    <alternativeName>
        <fullName>Control catabolite protein of gluconeogenesis</fullName>
    </alternativeName>
</protein>
<gene>
    <name type="primary">ccpN</name>
    <name type="synonym">yqzB</name>
    <name type="ordered locus">BSU25250</name>
</gene>
<organism>
    <name type="scientific">Bacillus subtilis (strain 168)</name>
    <dbReference type="NCBI Taxonomy" id="224308"/>
    <lineage>
        <taxon>Bacteria</taxon>
        <taxon>Bacillati</taxon>
        <taxon>Bacillota</taxon>
        <taxon>Bacilli</taxon>
        <taxon>Bacillales</taxon>
        <taxon>Bacillaceae</taxon>
        <taxon>Bacillus</taxon>
    </lineage>
</organism>
<comment type="function">
    <text evidence="3">Transcription repressor that binds to the promoter of gapB and pckA genes, preventing their expression. Acts as a regulator for catabolite repression of gluconeogenic genes.</text>
</comment>
<comment type="induction">
    <text evidence="3">Constitutively expressed.</text>
</comment>
<comment type="disruption phenotype">
    <text evidence="3">Relieves catabolite repression of gapB and pckA transcription. Disruption is epistatic over a yqfL deletion.</text>
</comment>
<keyword id="KW-0002">3D-structure</keyword>
<keyword id="KW-0238">DNA-binding</keyword>
<keyword id="KW-1185">Reference proteome</keyword>
<keyword id="KW-0677">Repeat</keyword>
<keyword id="KW-0678">Repressor</keyword>
<keyword id="KW-0804">Transcription</keyword>
<keyword id="KW-0805">Transcription regulation</keyword>
<proteinExistence type="evidence at protein level"/>
<name>CCPN_BACSU</name>
<dbReference type="EMBL" id="AL009126">
    <property type="protein sequence ID" value="CAB14454.1"/>
    <property type="molecule type" value="Genomic_DNA"/>
</dbReference>
<dbReference type="PIR" id="A69969">
    <property type="entry name" value="A69969"/>
</dbReference>
<dbReference type="RefSeq" id="NP_390403.1">
    <property type="nucleotide sequence ID" value="NC_000964.3"/>
</dbReference>
<dbReference type="RefSeq" id="WP_003237058.1">
    <property type="nucleotide sequence ID" value="NZ_OZ025638.1"/>
</dbReference>
<dbReference type="PDB" id="3FV6">
    <property type="method" value="X-ray"/>
    <property type="resolution" value="1.95 A"/>
    <property type="chains" value="A/B=63-212"/>
</dbReference>
<dbReference type="PDB" id="3FWR">
    <property type="method" value="X-ray"/>
    <property type="resolution" value="2.45 A"/>
    <property type="chains" value="A/B=63-212"/>
</dbReference>
<dbReference type="PDB" id="3FWS">
    <property type="method" value="X-ray"/>
    <property type="resolution" value="2.03 A"/>
    <property type="chains" value="A/B=63-212"/>
</dbReference>
<dbReference type="PDBsum" id="3FV6"/>
<dbReference type="PDBsum" id="3FWR"/>
<dbReference type="PDBsum" id="3FWS"/>
<dbReference type="SMR" id="O34994"/>
<dbReference type="FunCoup" id="O34994">
    <property type="interactions" value="44"/>
</dbReference>
<dbReference type="IntAct" id="O34994">
    <property type="interactions" value="2"/>
</dbReference>
<dbReference type="STRING" id="224308.BSU25250"/>
<dbReference type="PaxDb" id="224308-BSU25250"/>
<dbReference type="EnsemblBacteria" id="CAB14454">
    <property type="protein sequence ID" value="CAB14454"/>
    <property type="gene ID" value="BSU_25250"/>
</dbReference>
<dbReference type="GeneID" id="86872927"/>
<dbReference type="GeneID" id="937886"/>
<dbReference type="KEGG" id="bsu:BSU25250"/>
<dbReference type="PATRIC" id="fig|224308.179.peg.2744"/>
<dbReference type="eggNOG" id="COG0517">
    <property type="taxonomic scope" value="Bacteria"/>
</dbReference>
<dbReference type="InParanoid" id="O34994"/>
<dbReference type="OrthoDB" id="9793615at2"/>
<dbReference type="PhylomeDB" id="O34994"/>
<dbReference type="BioCyc" id="BSUB:BSU25250-MONOMER"/>
<dbReference type="EvolutionaryTrace" id="O34994"/>
<dbReference type="PRO" id="PR:O34994"/>
<dbReference type="Proteomes" id="UP000001570">
    <property type="component" value="Chromosome"/>
</dbReference>
<dbReference type="GO" id="GO:0003677">
    <property type="term" value="F:DNA binding"/>
    <property type="evidence" value="ECO:0007669"/>
    <property type="project" value="UniProtKB-KW"/>
</dbReference>
<dbReference type="GO" id="GO:0045013">
    <property type="term" value="P:carbon catabolite repression of transcription"/>
    <property type="evidence" value="ECO:0000315"/>
    <property type="project" value="CACAO"/>
</dbReference>
<dbReference type="CDD" id="cd04617">
    <property type="entry name" value="CBS_pair_CcpN"/>
    <property type="match status" value="1"/>
</dbReference>
<dbReference type="FunFam" id="1.10.10.10:FF:000257">
    <property type="entry name" value="Transcriptional repressor CcpN"/>
    <property type="match status" value="1"/>
</dbReference>
<dbReference type="FunFam" id="3.10.580.10:FF:000016">
    <property type="entry name" value="Transcriptional repressor CcpN"/>
    <property type="match status" value="1"/>
</dbReference>
<dbReference type="Gene3D" id="3.10.580.10">
    <property type="entry name" value="CBS-domain"/>
    <property type="match status" value="1"/>
</dbReference>
<dbReference type="Gene3D" id="1.10.10.10">
    <property type="entry name" value="Winged helix-like DNA-binding domain superfamily/Winged helix DNA-binding domain"/>
    <property type="match status" value="1"/>
</dbReference>
<dbReference type="InterPro" id="IPR000644">
    <property type="entry name" value="CBS_dom"/>
</dbReference>
<dbReference type="InterPro" id="IPR046342">
    <property type="entry name" value="CBS_dom_sf"/>
</dbReference>
<dbReference type="InterPro" id="IPR051462">
    <property type="entry name" value="CBS_domain-containing"/>
</dbReference>
<dbReference type="InterPro" id="IPR013196">
    <property type="entry name" value="HTH_11"/>
</dbReference>
<dbReference type="InterPro" id="IPR016842">
    <property type="entry name" value="UCP026546_HTH-CBS"/>
</dbReference>
<dbReference type="InterPro" id="IPR036388">
    <property type="entry name" value="WH-like_DNA-bd_sf"/>
</dbReference>
<dbReference type="InterPro" id="IPR036390">
    <property type="entry name" value="WH_DNA-bd_sf"/>
</dbReference>
<dbReference type="PANTHER" id="PTHR48108">
    <property type="entry name" value="CBS DOMAIN-CONTAINING PROTEIN CBSX2, CHLOROPLASTIC"/>
    <property type="match status" value="1"/>
</dbReference>
<dbReference type="PANTHER" id="PTHR48108:SF32">
    <property type="entry name" value="TRANSCRIPTIONAL REPRESSOR CCPN"/>
    <property type="match status" value="1"/>
</dbReference>
<dbReference type="Pfam" id="PF00571">
    <property type="entry name" value="CBS"/>
    <property type="match status" value="2"/>
</dbReference>
<dbReference type="Pfam" id="PF08279">
    <property type="entry name" value="HTH_11"/>
    <property type="match status" value="1"/>
</dbReference>
<dbReference type="PIRSF" id="PIRSF026546">
    <property type="entry name" value="UCP026546_CBS_YqzB"/>
    <property type="match status" value="1"/>
</dbReference>
<dbReference type="SMART" id="SM00116">
    <property type="entry name" value="CBS"/>
    <property type="match status" value="2"/>
</dbReference>
<dbReference type="SUPFAM" id="SSF54631">
    <property type="entry name" value="CBS-domain pair"/>
    <property type="match status" value="1"/>
</dbReference>
<dbReference type="SUPFAM" id="SSF46785">
    <property type="entry name" value="Winged helix' DNA-binding domain"/>
    <property type="match status" value="1"/>
</dbReference>
<dbReference type="PROSITE" id="PS51371">
    <property type="entry name" value="CBS"/>
    <property type="match status" value="2"/>
</dbReference>
<sequence>MSTIELNKRQEHILQIVKENGPITGEHIAEKLNLTRATLRPDLAILTMSGFLEARPRVGYFYTGKTGTQLLADKLKKLQVKDFQSIPVVIHENVSVYDAICTMFLEDVGTLFVVDRDAVLVGVLSRKDLLRASIGQQELTSVPVHIIMTRMPNITVCRREDYVMDIAKHLIEKQIDALPVIKDTDKGFEVIGRVTKTNMTKILVSLSENEIL</sequence>